<organism>
    <name type="scientific">Escherichia coli O157:H7</name>
    <dbReference type="NCBI Taxonomy" id="83334"/>
    <lineage>
        <taxon>Bacteria</taxon>
        <taxon>Pseudomonadati</taxon>
        <taxon>Pseudomonadota</taxon>
        <taxon>Gammaproteobacteria</taxon>
        <taxon>Enterobacterales</taxon>
        <taxon>Enterobacteriaceae</taxon>
        <taxon>Escherichia</taxon>
    </lineage>
</organism>
<name>QSED_ECO57</name>
<evidence type="ECO:0000269" key="1">
    <source>
    </source>
</evidence>
<evidence type="ECO:0000305" key="2"/>
<accession>Q8X487</accession>
<sequence length="242" mass="27718">MTPLQLSEQGKIFHSQIRHLLQQLESNLAELRGGSDYAQRKIKIAAAHSLSLGLLPSIISQMPPLFTWAIEAIDVDEAVDKLREGQSDCIFSFHDEDLLEAPFDHIRLFESQLFPVCASDEHGEALFDLVQPHFPLLNYSRNSYMGRLINRTLTRHSELSFSTFFVSSMSELLKQVALDGCGIAWLPEYAIQQEIRSGQLVVLNRDELVIPIQAYAYRMNTRMNPVAERFWRELRELEIVLS</sequence>
<keyword id="KW-0804">Transcription</keyword>
<keyword id="KW-0805">Transcription regulation</keyword>
<feature type="chain" id="PRO_0000403785" description="HTH domain-truncated transcriptional regulator QseD">
    <location>
        <begin position="1"/>
        <end position="242"/>
    </location>
</feature>
<gene>
    <name type="primary">qseD</name>
    <name type="ordered locus">Z5926</name>
</gene>
<dbReference type="EMBL" id="AE005174">
    <property type="protein sequence ID" value="AAG59510.1"/>
    <property type="molecule type" value="Genomic_DNA"/>
</dbReference>
<dbReference type="PIR" id="B86131">
    <property type="entry name" value="B86131"/>
</dbReference>
<dbReference type="SMR" id="Q8X487"/>
<dbReference type="KEGG" id="ece:Z5926"/>
<dbReference type="PATRIC" id="fig|83334.175.peg.51"/>
<dbReference type="eggNOG" id="COG0583">
    <property type="taxonomic scope" value="Bacteria"/>
</dbReference>
<dbReference type="Proteomes" id="UP000002519">
    <property type="component" value="Chromosome"/>
</dbReference>
<dbReference type="GO" id="GO:0000976">
    <property type="term" value="F:transcription cis-regulatory region binding"/>
    <property type="evidence" value="ECO:0007669"/>
    <property type="project" value="TreeGrafter"/>
</dbReference>
<dbReference type="GO" id="GO:0006355">
    <property type="term" value="P:regulation of DNA-templated transcription"/>
    <property type="evidence" value="ECO:0007669"/>
    <property type="project" value="TreeGrafter"/>
</dbReference>
<dbReference type="CDD" id="cd05466">
    <property type="entry name" value="PBP2_LTTR_substrate"/>
    <property type="match status" value="1"/>
</dbReference>
<dbReference type="Gene3D" id="3.40.190.290">
    <property type="match status" value="1"/>
</dbReference>
<dbReference type="InterPro" id="IPR005119">
    <property type="entry name" value="LysR_subst-bd"/>
</dbReference>
<dbReference type="NCBIfam" id="NF007488">
    <property type="entry name" value="PRK10082.1"/>
    <property type="match status" value="1"/>
</dbReference>
<dbReference type="PANTHER" id="PTHR30126">
    <property type="entry name" value="HTH-TYPE TRANSCRIPTIONAL REGULATOR"/>
    <property type="match status" value="1"/>
</dbReference>
<dbReference type="PANTHER" id="PTHR30126:SF2">
    <property type="entry name" value="HTH-TYPE TRANSCRIPTIONAL REGULATOR YJIE"/>
    <property type="match status" value="1"/>
</dbReference>
<dbReference type="Pfam" id="PF03466">
    <property type="entry name" value="LysR_substrate"/>
    <property type="match status" value="1"/>
</dbReference>
<dbReference type="SUPFAM" id="SSF53850">
    <property type="entry name" value="Periplasmic binding protein-like II"/>
    <property type="match status" value="1"/>
</dbReference>
<proteinExistence type="evidence at protein level"/>
<reference key="1">
    <citation type="journal article" date="2001" name="Nature">
        <title>Genome sequence of enterohaemorrhagic Escherichia coli O157:H7.</title>
        <authorList>
            <person name="Perna N.T."/>
            <person name="Plunkett G. III"/>
            <person name="Burland V."/>
            <person name="Mau B."/>
            <person name="Glasner J.D."/>
            <person name="Rose D.J."/>
            <person name="Mayhew G.F."/>
            <person name="Evans P.S."/>
            <person name="Gregor J."/>
            <person name="Kirkpatrick H.A."/>
            <person name="Posfai G."/>
            <person name="Hackett J."/>
            <person name="Klink S."/>
            <person name="Boutin A."/>
            <person name="Shao Y."/>
            <person name="Miller L."/>
            <person name="Grotbeck E.J."/>
            <person name="Davis N.W."/>
            <person name="Lim A."/>
            <person name="Dimalanta E.T."/>
            <person name="Potamousis K."/>
            <person name="Apodaca J."/>
            <person name="Anantharaman T.S."/>
            <person name="Lin J."/>
            <person name="Yen G."/>
            <person name="Schwartz D.C."/>
            <person name="Welch R.A."/>
            <person name="Blattner F.R."/>
        </authorList>
    </citation>
    <scope>NUCLEOTIDE SEQUENCE [LARGE SCALE GENOMIC DNA]</scope>
    <source>
        <strain>O157:H7 / EDL933 / ATCC 700927 / EHEC</strain>
    </source>
</reference>
<reference key="2">
    <citation type="journal article" date="2010" name="J. Bacteriol.">
        <title>The LysR-type transcriptional regulator QseD alters type three secretion in enterohemorrhagic Escherichia coli and motility in K-12 Escherichia coli.</title>
        <authorList>
            <person name="Habdas B.J."/>
            <person name="Smart J."/>
            <person name="Kaper J.B."/>
            <person name="Sperandio V."/>
        </authorList>
    </citation>
    <scope>FUNCTION AS A REPRESSOR</scope>
    <scope>INDUCTION</scope>
    <source>
        <strain>O157:H7 / 86-24 / EHEC</strain>
    </source>
</reference>
<comment type="function">
    <text evidence="1">Represses EHEC virulence expression. Down-regulates expression of LEE (locus of enterocyte effacement) and iraD genes, and alters AE (attaching and effacing) lesion formation. May regulate transcription through interactions with another HTH DNA-binding protein.</text>
</comment>
<comment type="induction">
    <text evidence="1">Transcription decreases during mid-log phase and is maximal during stationary phase.</text>
</comment>
<comment type="similarity">
    <text evidence="2">Belongs to the LysR transcriptional regulatory family.</text>
</comment>
<comment type="caution">
    <text evidence="2">Exists in some isolates as a HTH-truncated isoform. This short isoform is still able to regulate gene expression.</text>
</comment>
<protein>
    <recommendedName>
        <fullName>HTH domain-truncated transcriptional regulator QseD</fullName>
    </recommendedName>
    <alternativeName>
        <fullName>Quorum-sensing regulator protein D</fullName>
    </alternativeName>
</protein>